<accession>A7HDY2</accession>
<gene>
    <name evidence="1" type="primary">nusB</name>
    <name type="ordered locus">Anae109_2727</name>
</gene>
<protein>
    <recommendedName>
        <fullName evidence="1">Transcription antitermination protein NusB</fullName>
    </recommendedName>
    <alternativeName>
        <fullName evidence="1">Antitermination factor NusB</fullName>
    </alternativeName>
</protein>
<dbReference type="EMBL" id="CP000769">
    <property type="protein sequence ID" value="ABS26928.1"/>
    <property type="molecule type" value="Genomic_DNA"/>
</dbReference>
<dbReference type="RefSeq" id="WP_012097529.1">
    <property type="nucleotide sequence ID" value="NC_009675.1"/>
</dbReference>
<dbReference type="SMR" id="A7HDY2"/>
<dbReference type="STRING" id="404589.Anae109_2727"/>
<dbReference type="KEGG" id="afw:Anae109_2727"/>
<dbReference type="eggNOG" id="COG0781">
    <property type="taxonomic scope" value="Bacteria"/>
</dbReference>
<dbReference type="HOGENOM" id="CLU_087843_3_3_7"/>
<dbReference type="OrthoDB" id="9797817at2"/>
<dbReference type="Proteomes" id="UP000006382">
    <property type="component" value="Chromosome"/>
</dbReference>
<dbReference type="GO" id="GO:0005829">
    <property type="term" value="C:cytosol"/>
    <property type="evidence" value="ECO:0007669"/>
    <property type="project" value="TreeGrafter"/>
</dbReference>
<dbReference type="GO" id="GO:0003723">
    <property type="term" value="F:RNA binding"/>
    <property type="evidence" value="ECO:0007669"/>
    <property type="project" value="UniProtKB-UniRule"/>
</dbReference>
<dbReference type="GO" id="GO:0006353">
    <property type="term" value="P:DNA-templated transcription termination"/>
    <property type="evidence" value="ECO:0007669"/>
    <property type="project" value="UniProtKB-UniRule"/>
</dbReference>
<dbReference type="GO" id="GO:0031564">
    <property type="term" value="P:transcription antitermination"/>
    <property type="evidence" value="ECO:0007669"/>
    <property type="project" value="UniProtKB-KW"/>
</dbReference>
<dbReference type="CDD" id="cd00619">
    <property type="entry name" value="Terminator_NusB"/>
    <property type="match status" value="1"/>
</dbReference>
<dbReference type="Gene3D" id="1.10.940.10">
    <property type="entry name" value="NusB-like"/>
    <property type="match status" value="1"/>
</dbReference>
<dbReference type="HAMAP" id="MF_00073">
    <property type="entry name" value="NusB"/>
    <property type="match status" value="1"/>
</dbReference>
<dbReference type="InterPro" id="IPR035926">
    <property type="entry name" value="NusB-like_sf"/>
</dbReference>
<dbReference type="InterPro" id="IPR011605">
    <property type="entry name" value="NusB_fam"/>
</dbReference>
<dbReference type="InterPro" id="IPR006027">
    <property type="entry name" value="NusB_RsmB_TIM44"/>
</dbReference>
<dbReference type="NCBIfam" id="TIGR01951">
    <property type="entry name" value="nusB"/>
    <property type="match status" value="1"/>
</dbReference>
<dbReference type="PANTHER" id="PTHR11078:SF3">
    <property type="entry name" value="ANTITERMINATION NUSB DOMAIN-CONTAINING PROTEIN"/>
    <property type="match status" value="1"/>
</dbReference>
<dbReference type="PANTHER" id="PTHR11078">
    <property type="entry name" value="N UTILIZATION SUBSTANCE PROTEIN B-RELATED"/>
    <property type="match status" value="1"/>
</dbReference>
<dbReference type="Pfam" id="PF01029">
    <property type="entry name" value="NusB"/>
    <property type="match status" value="1"/>
</dbReference>
<dbReference type="SUPFAM" id="SSF48013">
    <property type="entry name" value="NusB-like"/>
    <property type="match status" value="1"/>
</dbReference>
<keyword id="KW-1185">Reference proteome</keyword>
<keyword id="KW-0694">RNA-binding</keyword>
<keyword id="KW-0804">Transcription</keyword>
<keyword id="KW-0889">Transcription antitermination</keyword>
<keyword id="KW-0805">Transcription regulation</keyword>
<evidence type="ECO:0000255" key="1">
    <source>
        <dbReference type="HAMAP-Rule" id="MF_00073"/>
    </source>
</evidence>
<organism>
    <name type="scientific">Anaeromyxobacter sp. (strain Fw109-5)</name>
    <dbReference type="NCBI Taxonomy" id="404589"/>
    <lineage>
        <taxon>Bacteria</taxon>
        <taxon>Pseudomonadati</taxon>
        <taxon>Myxococcota</taxon>
        <taxon>Myxococcia</taxon>
        <taxon>Myxococcales</taxon>
        <taxon>Cystobacterineae</taxon>
        <taxon>Anaeromyxobacteraceae</taxon>
        <taxon>Anaeromyxobacter</taxon>
    </lineage>
</organism>
<name>NUSB_ANADF</name>
<sequence>MSLKRTRARERALQALYQIDVAAEGIDDALSRFWKSFEPVEREVMEDAEGFVRGVAAHRRTIDDTIEGVSTNWRLDRMAKVDRNVLRLAVYELLRTDVPVKVAINEAIELGKKYGSESSGAFVNGVLDKVAAGLPPERRRTDR</sequence>
<comment type="function">
    <text evidence="1">Involved in transcription antitermination. Required for transcription of ribosomal RNA (rRNA) genes. Binds specifically to the boxA antiterminator sequence of the ribosomal RNA (rrn) operons.</text>
</comment>
<comment type="similarity">
    <text evidence="1">Belongs to the NusB family.</text>
</comment>
<reference key="1">
    <citation type="journal article" date="2015" name="Genome Announc.">
        <title>Complete genome sequence of Anaeromyxobacter sp. Fw109-5, an anaerobic, metal-reducing bacterium isolated from a contaminated subsurface environment.</title>
        <authorList>
            <person name="Hwang C."/>
            <person name="Copeland A."/>
            <person name="Lucas S."/>
            <person name="Lapidus A."/>
            <person name="Barry K."/>
            <person name="Glavina Del Rio T."/>
            <person name="Dalin E."/>
            <person name="Tice H."/>
            <person name="Pitluck S."/>
            <person name="Sims D."/>
            <person name="Brettin T."/>
            <person name="Bruce D.C."/>
            <person name="Detter J.C."/>
            <person name="Han C.S."/>
            <person name="Schmutz J."/>
            <person name="Larimer F.W."/>
            <person name="Land M.L."/>
            <person name="Hauser L.J."/>
            <person name="Kyrpides N."/>
            <person name="Lykidis A."/>
            <person name="Richardson P."/>
            <person name="Belieav A."/>
            <person name="Sanford R.A."/>
            <person name="Loeffler F.E."/>
            <person name="Fields M.W."/>
        </authorList>
    </citation>
    <scope>NUCLEOTIDE SEQUENCE [LARGE SCALE GENOMIC DNA]</scope>
    <source>
        <strain>Fw109-5</strain>
    </source>
</reference>
<feature type="chain" id="PRO_1000023703" description="Transcription antitermination protein NusB">
    <location>
        <begin position="1"/>
        <end position="143"/>
    </location>
</feature>
<proteinExistence type="inferred from homology"/>